<keyword id="KW-0007">Acetylation</keyword>
<keyword id="KW-0021">Allosteric enzyme</keyword>
<keyword id="KW-0067">ATP-binding</keyword>
<keyword id="KW-0963">Cytoplasm</keyword>
<keyword id="KW-0324">Glycolysis</keyword>
<keyword id="KW-0391">Immunity</keyword>
<keyword id="KW-0395">Inflammatory response</keyword>
<keyword id="KW-0399">Innate immunity</keyword>
<keyword id="KW-0418">Kinase</keyword>
<keyword id="KW-0472">Membrane</keyword>
<keyword id="KW-0496">Mitochondrion</keyword>
<keyword id="KW-1000">Mitochondrion outer membrane</keyword>
<keyword id="KW-0547">Nucleotide-binding</keyword>
<keyword id="KW-0597">Phosphoprotein</keyword>
<keyword id="KW-1185">Reference proteome</keyword>
<keyword id="KW-0677">Repeat</keyword>
<keyword id="KW-0808">Transferase</keyword>
<protein>
    <recommendedName>
        <fullName evidence="5">Hexokinase-1</fullName>
        <ecNumber evidence="3">2.7.1.1</ecNumber>
    </recommendedName>
    <alternativeName>
        <fullName evidence="3">Hexokinase type I</fullName>
        <shortName evidence="3">HK I</shortName>
    </alternativeName>
</protein>
<feature type="chain" id="PRO_0000286047" description="Hexokinase-1">
    <location>
        <begin position="1"/>
        <end position="917"/>
    </location>
</feature>
<feature type="domain" description="Hexokinase 1" evidence="4">
    <location>
        <begin position="16"/>
        <end position="458"/>
    </location>
</feature>
<feature type="domain" description="Hexokinase 2" evidence="4">
    <location>
        <begin position="464"/>
        <end position="906"/>
    </location>
</feature>
<feature type="region of interest" description="Mitochondrial-binding peptide (MBP)" evidence="3">
    <location>
        <begin position="1"/>
        <end position="10"/>
    </location>
</feature>
<feature type="region of interest" description="Hexokinase small subdomain 1" evidence="4">
    <location>
        <begin position="73"/>
        <end position="207"/>
    </location>
</feature>
<feature type="region of interest" description="Hexokinase large subdomain 1" evidence="4">
    <location>
        <begin position="208"/>
        <end position="447"/>
    </location>
</feature>
<feature type="region of interest" description="Hexokinase small subdomain 2" evidence="4">
    <location>
        <begin position="521"/>
        <end position="655"/>
    </location>
</feature>
<feature type="region of interest" description="Hexokinase large subdomain 2" evidence="4">
    <location>
        <begin position="656"/>
        <end position="895"/>
    </location>
</feature>
<feature type="binding site" evidence="3">
    <location>
        <position position="30"/>
    </location>
    <ligand>
        <name>ATP</name>
        <dbReference type="ChEBI" id="CHEBI:30616"/>
        <label>1</label>
    </ligand>
</feature>
<feature type="binding site" evidence="3">
    <location>
        <begin position="84"/>
        <end position="91"/>
    </location>
    <ligand>
        <name>D-glucose 6-phosphate</name>
        <dbReference type="ChEBI" id="CHEBI:61548"/>
        <label>1</label>
    </ligand>
</feature>
<feature type="binding site" evidence="3">
    <location>
        <begin position="84"/>
        <end position="89"/>
    </location>
    <ligand>
        <name>ATP</name>
        <dbReference type="ChEBI" id="CHEBI:30616"/>
        <label>1</label>
    </ligand>
</feature>
<feature type="binding site" evidence="3">
    <location>
        <position position="155"/>
    </location>
    <ligand>
        <name>D-glucose</name>
        <dbReference type="ChEBI" id="CHEBI:4167"/>
        <label>1</label>
    </ligand>
</feature>
<feature type="binding site" evidence="3">
    <location>
        <begin position="172"/>
        <end position="173"/>
    </location>
    <ligand>
        <name>D-glucose</name>
        <dbReference type="ChEBI" id="CHEBI:4167"/>
        <label>1</label>
    </ligand>
</feature>
<feature type="binding site" evidence="3">
    <location>
        <begin position="208"/>
        <end position="209"/>
    </location>
    <ligand>
        <name>D-glucose</name>
        <dbReference type="ChEBI" id="CHEBI:4167"/>
        <label>1</label>
    </ligand>
</feature>
<feature type="binding site" evidence="3">
    <location>
        <position position="209"/>
    </location>
    <ligand>
        <name>D-glucose 6-phosphate</name>
        <dbReference type="ChEBI" id="CHEBI:61548"/>
        <label>1</label>
    </ligand>
</feature>
<feature type="binding site" evidence="3">
    <location>
        <position position="232"/>
    </location>
    <ligand>
        <name>D-glucose 6-phosphate</name>
        <dbReference type="ChEBI" id="CHEBI:61548"/>
        <label>1</label>
    </ligand>
</feature>
<feature type="binding site" evidence="3">
    <location>
        <position position="235"/>
    </location>
    <ligand>
        <name>D-glucose</name>
        <dbReference type="ChEBI" id="CHEBI:4167"/>
        <label>1</label>
    </ligand>
</feature>
<feature type="binding site" evidence="3">
    <location>
        <position position="260"/>
    </location>
    <ligand>
        <name>D-glucose</name>
        <dbReference type="ChEBI" id="CHEBI:4167"/>
        <label>1</label>
    </ligand>
</feature>
<feature type="binding site" evidence="3">
    <location>
        <begin position="291"/>
        <end position="294"/>
    </location>
    <ligand>
        <name>D-glucose</name>
        <dbReference type="ChEBI" id="CHEBI:4167"/>
        <label>1</label>
    </ligand>
</feature>
<feature type="binding site" evidence="3">
    <location>
        <position position="345"/>
    </location>
    <ligand>
        <name>ATP</name>
        <dbReference type="ChEBI" id="CHEBI:30616"/>
        <label>1</label>
    </ligand>
</feature>
<feature type="binding site" evidence="3">
    <location>
        <begin position="413"/>
        <end position="415"/>
    </location>
    <ligand>
        <name>D-glucose 6-phosphate</name>
        <dbReference type="ChEBI" id="CHEBI:61548"/>
        <label>1</label>
    </ligand>
</feature>
<feature type="binding site" evidence="3">
    <location>
        <begin position="425"/>
        <end position="426"/>
    </location>
    <ligand>
        <name>ATP</name>
        <dbReference type="ChEBI" id="CHEBI:30616"/>
        <label>1</label>
    </ligand>
</feature>
<feature type="binding site" evidence="3">
    <location>
        <position position="449"/>
    </location>
    <ligand>
        <name>D-glucose 6-phosphate</name>
        <dbReference type="ChEBI" id="CHEBI:61548"/>
        <label>1</label>
    </ligand>
</feature>
<feature type="binding site" evidence="3">
    <location>
        <begin position="532"/>
        <end position="537"/>
    </location>
    <ligand>
        <name>ATP</name>
        <dbReference type="ChEBI" id="CHEBI:30616"/>
        <label>2</label>
    </ligand>
</feature>
<feature type="binding site" evidence="3">
    <location>
        <begin position="532"/>
        <end position="536"/>
    </location>
    <ligand>
        <name>D-glucose 6-phosphate</name>
        <dbReference type="ChEBI" id="CHEBI:61548"/>
        <label>2</label>
    </ligand>
</feature>
<feature type="binding site" evidence="3">
    <location>
        <begin position="603"/>
        <end position="604"/>
    </location>
    <ligand>
        <name>D-glucose</name>
        <dbReference type="ChEBI" id="CHEBI:4167"/>
        <label>2</label>
    </ligand>
</feature>
<feature type="binding site" evidence="3">
    <location>
        <begin position="620"/>
        <end position="621"/>
    </location>
    <ligand>
        <name>D-glucose</name>
        <dbReference type="ChEBI" id="CHEBI:4167"/>
        <label>2</label>
    </ligand>
</feature>
<feature type="binding site" evidence="3">
    <location>
        <begin position="656"/>
        <end position="657"/>
    </location>
    <ligand>
        <name>D-glucose</name>
        <dbReference type="ChEBI" id="CHEBI:4167"/>
        <label>2</label>
    </ligand>
</feature>
<feature type="binding site" evidence="3">
    <location>
        <position position="657"/>
    </location>
    <ligand>
        <name>D-glucose 6-phosphate</name>
        <dbReference type="ChEBI" id="CHEBI:61548"/>
        <label>2</label>
    </ligand>
</feature>
<feature type="binding site" evidence="3">
    <location>
        <position position="680"/>
    </location>
    <ligand>
        <name>ATP</name>
        <dbReference type="ChEBI" id="CHEBI:30616"/>
        <label>2</label>
    </ligand>
</feature>
<feature type="binding site" evidence="3">
    <location>
        <position position="680"/>
    </location>
    <ligand>
        <name>D-glucose 6-phosphate</name>
        <dbReference type="ChEBI" id="CHEBI:61548"/>
        <label>2</label>
    </ligand>
</feature>
<feature type="binding site" evidence="3">
    <location>
        <begin position="682"/>
        <end position="683"/>
    </location>
    <ligand>
        <name>D-glucose</name>
        <dbReference type="ChEBI" id="CHEBI:4167"/>
        <label>2</label>
    </ligand>
</feature>
<feature type="binding site" evidence="3">
    <location>
        <position position="708"/>
    </location>
    <ligand>
        <name>D-glucose</name>
        <dbReference type="ChEBI" id="CHEBI:4167"/>
        <label>2</label>
    </ligand>
</feature>
<feature type="binding site" evidence="3">
    <location>
        <position position="742"/>
    </location>
    <ligand>
        <name>D-glucose</name>
        <dbReference type="ChEBI" id="CHEBI:4167"/>
        <label>2</label>
    </ligand>
</feature>
<feature type="binding site" evidence="3">
    <location>
        <begin position="747"/>
        <end position="748"/>
    </location>
    <ligand>
        <name>ATP</name>
        <dbReference type="ChEBI" id="CHEBI:30616"/>
        <label>2</label>
    </ligand>
</feature>
<feature type="binding site" evidence="3">
    <location>
        <begin position="784"/>
        <end position="788"/>
    </location>
    <ligand>
        <name>ATP</name>
        <dbReference type="ChEBI" id="CHEBI:30616"/>
        <label>2</label>
    </ligand>
</feature>
<feature type="binding site" evidence="3">
    <location>
        <begin position="861"/>
        <end position="863"/>
    </location>
    <ligand>
        <name>D-glucose 6-phosphate</name>
        <dbReference type="ChEBI" id="CHEBI:61548"/>
        <label>2</label>
    </ligand>
</feature>
<feature type="binding site" evidence="3">
    <location>
        <begin position="863"/>
        <end position="867"/>
    </location>
    <ligand>
        <name>ATP</name>
        <dbReference type="ChEBI" id="CHEBI:30616"/>
        <label>2</label>
    </ligand>
</feature>
<feature type="binding site" evidence="3">
    <location>
        <position position="897"/>
    </location>
    <ligand>
        <name>D-glucose 6-phosphate</name>
        <dbReference type="ChEBI" id="CHEBI:61548"/>
        <label>2</label>
    </ligand>
</feature>
<feature type="modified residue" description="N-acetylmethionine" evidence="3">
    <location>
        <position position="1"/>
    </location>
</feature>
<feature type="modified residue" description="Phosphoserine" evidence="1">
    <location>
        <position position="337"/>
    </location>
</feature>
<sequence length="917" mass="102363">MIAAQLLAYYFTELKDDQVKKIDKYLYAMRLSDETLIDIMTRFRKEMKNGLSRDFNPTATVKMLPTFVRSIPDGSEKGDFIALDLGGSSFRILRVQVNHEKNQNVHMESEVYDTPENIVHGSGSQLFDHVAECLGDFMEKRKIKDKKSPVGFTFSFPCQQSKIDEAVLITWTKRFKASGVEGADVVKLLNKAIKKRGDYDANIVAVVNDTVGTMMTCGYDDQHCEVGLIIGTGTNACYMEELRHIDLVEGDEGRMCINTEWGAFGDDGSLEDIRTEFDREIDRGSLNPGKQLFEKMVSGMYLGELVRLILVKMAKEGLLFEGRITPELLTRGKFNTSDVSAIEKNKEGLHNAKEILTRLGVEPSDDDCVSVQHVCTIVSFRSANLVAATLGAILNRLRDNKGTPRLRTTVGVDGSLYKTHPQYSRRFHKTLRRLVPDSDVRFLLSESGSGKGAAMVTAVAYRLAEQHRQIEETLAHFHLTKDMLLEVKKRMRAEMELGLRKQTHNNAAVKMLPSFVRRTPDGTENGDFLALDLGGTNFRVLLVKIRSGKKRTVEMHNKIYAIPIEIMQGTGEELFDHIVSCISDFLDYMGIKGPRMPLGFTFSFPCKQTSLDAGILITWTKGFKATDCVGNDVATLLRDAIKRREEFDLDVVAVVNDTVGTMMTCAYEEPTCEVGLIVGTGSNACYMEEMKNVEMVEGDQGQMCINMEWGAFGDNGCLDDIRTHYDRLVDEYSLNAGKQRYEKMISGMYLGEIVRNILIDFTKKGFLFRGQISEPLKTRGIFETKFLSQIESDRLALLQVRAILQQLGLNSTCDDSILVKTVCGVVSRRAAQLCGAGMAAVVDKIRENRGLDRLNVTVGVDGTLYKLHPHFSRIMHQTVKELSPKCNVSFLLSEDGSGKGAALITAVGVRLRTEASS</sequence>
<reference key="1">
    <citation type="submission" date="2004-11" db="EMBL/GenBank/DDBJ databases">
        <authorList>
            <consortium name="The German cDNA consortium"/>
        </authorList>
    </citation>
    <scope>NUCLEOTIDE SEQUENCE [LARGE SCALE MRNA]</scope>
    <source>
        <tissue>Brain cortex</tissue>
    </source>
</reference>
<proteinExistence type="evidence at transcript level"/>
<organism>
    <name type="scientific">Pongo abelii</name>
    <name type="common">Sumatran orangutan</name>
    <name type="synonym">Pongo pygmaeus abelii</name>
    <dbReference type="NCBI Taxonomy" id="9601"/>
    <lineage>
        <taxon>Eukaryota</taxon>
        <taxon>Metazoa</taxon>
        <taxon>Chordata</taxon>
        <taxon>Craniata</taxon>
        <taxon>Vertebrata</taxon>
        <taxon>Euteleostomi</taxon>
        <taxon>Mammalia</taxon>
        <taxon>Eutheria</taxon>
        <taxon>Euarchontoglires</taxon>
        <taxon>Primates</taxon>
        <taxon>Haplorrhini</taxon>
        <taxon>Catarrhini</taxon>
        <taxon>Hominidae</taxon>
        <taxon>Pongo</taxon>
    </lineage>
</organism>
<evidence type="ECO:0000250" key="1">
    <source>
        <dbReference type="UniProtKB" id="P05708"/>
    </source>
</evidence>
<evidence type="ECO:0000250" key="2">
    <source>
        <dbReference type="UniProtKB" id="P17710"/>
    </source>
</evidence>
<evidence type="ECO:0000250" key="3">
    <source>
        <dbReference type="UniProtKB" id="P19367"/>
    </source>
</evidence>
<evidence type="ECO:0000255" key="4">
    <source>
        <dbReference type="PROSITE-ProRule" id="PRU01084"/>
    </source>
</evidence>
<evidence type="ECO:0000305" key="5"/>
<comment type="function">
    <text evidence="1 3">Catalyzes the phosphorylation of various hexoses, such as D-glucose, D-glucosamine, D-fructose, D-mannose and 2-deoxy-D-glucose, to hexose 6-phosphate (D-glucose 6-phosphate, D-glucosamine 6-phosphate, D-fructose 6-phosphate, D-mannose 6-phosphate and 2-deoxy-D-glucose 6-phosphate, respectively). Does not phosphorylate N-acetyl-D-glucosamine (By similarity). Mediates the initial step of glycolysis by catalyzing phosphorylation of D-glucose to D-glucose 6-phosphate (By similarity). Involved in innate immunity and inflammation by acting as a pattern recognition receptor for bacterial peptidoglycan. When released in the cytosol, N-acetyl-D-glucosamine component of bacterial peptidoglycan inhibits the hexokinase activity of HK1 and causes its dissociation from mitochondrial outer membrane, thereby activating the NLRP3 inflammasome (By similarity).</text>
</comment>
<comment type="catalytic activity">
    <reaction evidence="3">
        <text>a D-hexose + ATP = a D-hexose 6-phosphate + ADP + H(+)</text>
        <dbReference type="Rhea" id="RHEA:22740"/>
        <dbReference type="ChEBI" id="CHEBI:4194"/>
        <dbReference type="ChEBI" id="CHEBI:15378"/>
        <dbReference type="ChEBI" id="CHEBI:30616"/>
        <dbReference type="ChEBI" id="CHEBI:229467"/>
        <dbReference type="ChEBI" id="CHEBI:456216"/>
        <dbReference type="EC" id="2.7.1.1"/>
    </reaction>
    <physiologicalReaction direction="left-to-right" evidence="3">
        <dbReference type="Rhea" id="RHEA:22741"/>
    </physiologicalReaction>
</comment>
<comment type="catalytic activity">
    <reaction evidence="1">
        <text>D-fructose + ATP = D-fructose 6-phosphate + ADP + H(+)</text>
        <dbReference type="Rhea" id="RHEA:16125"/>
        <dbReference type="ChEBI" id="CHEBI:15378"/>
        <dbReference type="ChEBI" id="CHEBI:30616"/>
        <dbReference type="ChEBI" id="CHEBI:37721"/>
        <dbReference type="ChEBI" id="CHEBI:61527"/>
        <dbReference type="ChEBI" id="CHEBI:456216"/>
        <dbReference type="EC" id="2.7.1.1"/>
    </reaction>
    <physiologicalReaction direction="left-to-right" evidence="1">
        <dbReference type="Rhea" id="RHEA:16126"/>
    </physiologicalReaction>
</comment>
<comment type="catalytic activity">
    <reaction evidence="1">
        <text>D-glucose + ATP = D-glucose 6-phosphate + ADP + H(+)</text>
        <dbReference type="Rhea" id="RHEA:17825"/>
        <dbReference type="ChEBI" id="CHEBI:4167"/>
        <dbReference type="ChEBI" id="CHEBI:15378"/>
        <dbReference type="ChEBI" id="CHEBI:30616"/>
        <dbReference type="ChEBI" id="CHEBI:61548"/>
        <dbReference type="ChEBI" id="CHEBI:456216"/>
        <dbReference type="EC" id="2.7.1.1"/>
    </reaction>
    <physiologicalReaction direction="left-to-right" evidence="1">
        <dbReference type="Rhea" id="RHEA:17826"/>
    </physiologicalReaction>
</comment>
<comment type="catalytic activity">
    <reaction evidence="1">
        <text>D-mannose + ATP = D-mannose 6-phosphate + ADP + H(+)</text>
        <dbReference type="Rhea" id="RHEA:11028"/>
        <dbReference type="ChEBI" id="CHEBI:4208"/>
        <dbReference type="ChEBI" id="CHEBI:15378"/>
        <dbReference type="ChEBI" id="CHEBI:30616"/>
        <dbReference type="ChEBI" id="CHEBI:58735"/>
        <dbReference type="ChEBI" id="CHEBI:456216"/>
        <dbReference type="EC" id="2.7.1.1"/>
    </reaction>
    <physiologicalReaction direction="left-to-right" evidence="1">
        <dbReference type="Rhea" id="RHEA:11029"/>
    </physiologicalReaction>
</comment>
<comment type="catalytic activity">
    <reaction evidence="3">
        <text>D-glucosamine + ATP = D-glucosamine 6-phosphate + ADP + H(+)</text>
        <dbReference type="Rhea" id="RHEA:10948"/>
        <dbReference type="ChEBI" id="CHEBI:15378"/>
        <dbReference type="ChEBI" id="CHEBI:30616"/>
        <dbReference type="ChEBI" id="CHEBI:58723"/>
        <dbReference type="ChEBI" id="CHEBI:58725"/>
        <dbReference type="ChEBI" id="CHEBI:456216"/>
        <dbReference type="EC" id="2.7.1.1"/>
    </reaction>
    <physiologicalReaction direction="left-to-right" evidence="3">
        <dbReference type="Rhea" id="RHEA:10949"/>
    </physiologicalReaction>
</comment>
<comment type="activity regulation">
    <text evidence="3">Hexokinase is an allosteric enzyme inhibited by its product D-glucose 6-phosphate. Hexokinase activity is inhibited by N-acetyl-D-glucosamine.</text>
</comment>
<comment type="pathway">
    <text evidence="3">Carbohydrate metabolism; hexose metabolism.</text>
</comment>
<comment type="pathway">
    <text evidence="1">Carbohydrate degradation; glycolysis; D-glyceraldehyde 3-phosphate and glycerone phosphate from D-glucose: step 1/4.</text>
</comment>
<comment type="subunit">
    <text evidence="2 3">Monomer (By similarity). Interacts with RABL2/RABL2A; binds preferentially to GTP-bound RABL2 (By similarity). Interacts with VDAC1. The HK1-VDAC1 complex interacts with ATF2 (By similarity). Interacts (via N-terminal spermatogenic cell-specific region) with PFKM (via C-terminus) (By similarity). Interacts with SMAD5 (By similarity).</text>
</comment>
<comment type="subcellular location">
    <subcellularLocation>
        <location evidence="3">Mitochondrion outer membrane</location>
        <topology evidence="3">Peripheral membrane protein</topology>
    </subcellularLocation>
    <subcellularLocation>
        <location evidence="3">Cytoplasm</location>
        <location evidence="3">Cytosol</location>
    </subcellularLocation>
    <text evidence="3">The mitochondrial-binding peptide (MBP) region promotes association with the mitochondrial outer membrane. Dissociates from the mitochondrial outer membrane following inhibition by N-acetyl-D-glucosamine, leading to relocation to the cytosol.</text>
</comment>
<comment type="domain">
    <text evidence="3">The N- and C-terminal halves of this hexokinase contain a hexokinase domain. The catalytic activity is associated with the C-terminus while regulatory function is associated with the N-terminus. Each domain can bind a single D-glucose and D-glucose 6-phosphate molecule.</text>
</comment>
<comment type="similarity">
    <text evidence="4 5">Belongs to the hexokinase family.</text>
</comment>
<name>HXK1_PONAB</name>
<dbReference type="EC" id="2.7.1.1" evidence="3"/>
<dbReference type="EMBL" id="CR858409">
    <property type="protein sequence ID" value="CAH90636.1"/>
    <property type="molecule type" value="mRNA"/>
</dbReference>
<dbReference type="RefSeq" id="NP_001125344.1">
    <property type="nucleotide sequence ID" value="NM_001131872.1"/>
</dbReference>
<dbReference type="SMR" id="Q5RC71"/>
<dbReference type="FunCoup" id="Q5RC71">
    <property type="interactions" value="1627"/>
</dbReference>
<dbReference type="STRING" id="9601.ENSPPYP00000002765"/>
<dbReference type="GeneID" id="100172246"/>
<dbReference type="KEGG" id="pon:100172246"/>
<dbReference type="CTD" id="3098"/>
<dbReference type="eggNOG" id="KOG1369">
    <property type="taxonomic scope" value="Eukaryota"/>
</dbReference>
<dbReference type="InParanoid" id="Q5RC71"/>
<dbReference type="OrthoDB" id="419537at2759"/>
<dbReference type="UniPathway" id="UPA00109">
    <property type="reaction ID" value="UER00180"/>
</dbReference>
<dbReference type="UniPathway" id="UPA00242"/>
<dbReference type="Proteomes" id="UP000001595">
    <property type="component" value="Unplaced"/>
</dbReference>
<dbReference type="GO" id="GO:0005829">
    <property type="term" value="C:cytosol"/>
    <property type="evidence" value="ECO:0007669"/>
    <property type="project" value="UniProtKB-SubCell"/>
</dbReference>
<dbReference type="GO" id="GO:0005741">
    <property type="term" value="C:mitochondrial outer membrane"/>
    <property type="evidence" value="ECO:0007669"/>
    <property type="project" value="UniProtKB-SubCell"/>
</dbReference>
<dbReference type="GO" id="GO:0005524">
    <property type="term" value="F:ATP binding"/>
    <property type="evidence" value="ECO:0007669"/>
    <property type="project" value="UniProtKB-KW"/>
</dbReference>
<dbReference type="GO" id="GO:0005536">
    <property type="term" value="F:D-glucose binding"/>
    <property type="evidence" value="ECO:0007669"/>
    <property type="project" value="InterPro"/>
</dbReference>
<dbReference type="GO" id="GO:0008865">
    <property type="term" value="F:fructokinase activity"/>
    <property type="evidence" value="ECO:0000250"/>
    <property type="project" value="UniProtKB"/>
</dbReference>
<dbReference type="GO" id="GO:0004340">
    <property type="term" value="F:glucokinase activity"/>
    <property type="evidence" value="ECO:0000250"/>
    <property type="project" value="UniProtKB"/>
</dbReference>
<dbReference type="GO" id="GO:0047931">
    <property type="term" value="F:glucosamine kinase activity"/>
    <property type="evidence" value="ECO:0007669"/>
    <property type="project" value="RHEA"/>
</dbReference>
<dbReference type="GO" id="GO:0019158">
    <property type="term" value="F:mannokinase activity"/>
    <property type="evidence" value="ECO:0000250"/>
    <property type="project" value="UniProtKB"/>
</dbReference>
<dbReference type="GO" id="GO:0006002">
    <property type="term" value="P:fructose 6-phosphate metabolic process"/>
    <property type="evidence" value="ECO:0000250"/>
    <property type="project" value="UniProtKB"/>
</dbReference>
<dbReference type="GO" id="GO:0051156">
    <property type="term" value="P:glucose 6-phosphate metabolic process"/>
    <property type="evidence" value="ECO:0000250"/>
    <property type="project" value="UniProtKB"/>
</dbReference>
<dbReference type="GO" id="GO:0006006">
    <property type="term" value="P:glucose metabolic process"/>
    <property type="evidence" value="ECO:0007669"/>
    <property type="project" value="TreeGrafter"/>
</dbReference>
<dbReference type="GO" id="GO:0006096">
    <property type="term" value="P:glycolytic process"/>
    <property type="evidence" value="ECO:0007669"/>
    <property type="project" value="UniProtKB-UniPathway"/>
</dbReference>
<dbReference type="GO" id="GO:0006954">
    <property type="term" value="P:inflammatory response"/>
    <property type="evidence" value="ECO:0007669"/>
    <property type="project" value="UniProtKB-KW"/>
</dbReference>
<dbReference type="GO" id="GO:0045087">
    <property type="term" value="P:innate immune response"/>
    <property type="evidence" value="ECO:0007669"/>
    <property type="project" value="UniProtKB-KW"/>
</dbReference>
<dbReference type="GO" id="GO:0001678">
    <property type="term" value="P:intracellular glucose homeostasis"/>
    <property type="evidence" value="ECO:0007669"/>
    <property type="project" value="InterPro"/>
</dbReference>
<dbReference type="GO" id="GO:0006013">
    <property type="term" value="P:mannose metabolic process"/>
    <property type="evidence" value="ECO:0000250"/>
    <property type="project" value="UniProtKB"/>
</dbReference>
<dbReference type="CDD" id="cd24124">
    <property type="entry name" value="ASKHA_NBD_HK1_meta_rpt1"/>
    <property type="match status" value="1"/>
</dbReference>
<dbReference type="CDD" id="cd24127">
    <property type="entry name" value="ASKHA_NBD_HK1_meta_rpt2"/>
    <property type="match status" value="1"/>
</dbReference>
<dbReference type="FunFam" id="3.30.420.40:FF:000015">
    <property type="entry name" value="Hexokinase 1"/>
    <property type="match status" value="2"/>
</dbReference>
<dbReference type="FunFam" id="3.40.367.20:FF:000001">
    <property type="entry name" value="Hexokinase 1"/>
    <property type="match status" value="1"/>
</dbReference>
<dbReference type="FunFam" id="3.40.367.20:FF:000020">
    <property type="entry name" value="Hexokinase-1"/>
    <property type="match status" value="1"/>
</dbReference>
<dbReference type="Gene3D" id="3.30.420.40">
    <property type="match status" value="2"/>
</dbReference>
<dbReference type="Gene3D" id="3.40.367.20">
    <property type="match status" value="2"/>
</dbReference>
<dbReference type="InterPro" id="IPR043129">
    <property type="entry name" value="ATPase_NBD"/>
</dbReference>
<dbReference type="InterPro" id="IPR001312">
    <property type="entry name" value="Hexokinase"/>
</dbReference>
<dbReference type="InterPro" id="IPR019807">
    <property type="entry name" value="Hexokinase_BS"/>
</dbReference>
<dbReference type="InterPro" id="IPR022673">
    <property type="entry name" value="Hexokinase_C"/>
</dbReference>
<dbReference type="InterPro" id="IPR022672">
    <property type="entry name" value="Hexokinase_N"/>
</dbReference>
<dbReference type="PANTHER" id="PTHR19443">
    <property type="entry name" value="HEXOKINASE"/>
    <property type="match status" value="1"/>
</dbReference>
<dbReference type="PANTHER" id="PTHR19443:SF10">
    <property type="entry name" value="HEXOKINASE-1"/>
    <property type="match status" value="1"/>
</dbReference>
<dbReference type="Pfam" id="PF00349">
    <property type="entry name" value="Hexokinase_1"/>
    <property type="match status" value="2"/>
</dbReference>
<dbReference type="Pfam" id="PF03727">
    <property type="entry name" value="Hexokinase_2"/>
    <property type="match status" value="2"/>
</dbReference>
<dbReference type="PRINTS" id="PR00475">
    <property type="entry name" value="HEXOKINASE"/>
</dbReference>
<dbReference type="SUPFAM" id="SSF53067">
    <property type="entry name" value="Actin-like ATPase domain"/>
    <property type="match status" value="4"/>
</dbReference>
<dbReference type="PROSITE" id="PS00378">
    <property type="entry name" value="HEXOKINASE_1"/>
    <property type="match status" value="2"/>
</dbReference>
<dbReference type="PROSITE" id="PS51748">
    <property type="entry name" value="HEXOKINASE_2"/>
    <property type="match status" value="2"/>
</dbReference>
<gene>
    <name evidence="3" type="primary">HK1</name>
</gene>
<accession>Q5RC71</accession>